<sequence length="525" mass="58878">MTENIHKHRILILDFGSQYTQLVARRVRELGVYCELWAWDVTEAQIREFNPSGIILSGGPESTTEENSPRAPQYVFEAGVPVFGVCYGMQTMAMQLGGHVEGSNEREFGYAQVEVVNDSALVRGIEDSLTADGKPLLDVWMSHGDKVTAIPSDFVTVASTDNCPFAIMANEEKRFYGVQFHPEVTHTRQGMRMLERFVRDICQCEALWTPAKIIDDAVERIRQQVGDDKVILGLSGGVDSSVTAMLLHRAIGKNLTCVFVDNGLLRLNEAQQVMDMFGDHFGLNIVHVEGEQRFLDALKGENDPEAKRKIIGRVFVEVFDEEALKLDDVKWLAQGTIYPDVIESAASATGKAHVIKSHHNVGGLPKEMKMGLVEPLRELFKDEVRKIGLELGLPYDMLYRHPFPGPGLGVRVLGEVKKEYCDLLRRADAIFIEELHKADLYNKVSQAFTVFLPVRSVGVMGDGRKYDWVVSLRAVETIDFMTAHWAHLPYDFLGRVSNRIINEVNGISRVVYDISGKPPATIEWE</sequence>
<accession>B5XNM4</accession>
<proteinExistence type="inferred from homology"/>
<name>GUAA_KLEP3</name>
<feature type="chain" id="PRO_1000120322" description="GMP synthase [glutamine-hydrolyzing]">
    <location>
        <begin position="1"/>
        <end position="525"/>
    </location>
</feature>
<feature type="domain" description="Glutamine amidotransferase type-1" evidence="1">
    <location>
        <begin position="9"/>
        <end position="207"/>
    </location>
</feature>
<feature type="domain" description="GMPS ATP-PPase" evidence="1">
    <location>
        <begin position="208"/>
        <end position="400"/>
    </location>
</feature>
<feature type="active site" description="Nucleophile" evidence="1">
    <location>
        <position position="86"/>
    </location>
</feature>
<feature type="active site" evidence="1">
    <location>
        <position position="181"/>
    </location>
</feature>
<feature type="active site" evidence="1">
    <location>
        <position position="183"/>
    </location>
</feature>
<feature type="binding site" evidence="1">
    <location>
        <begin position="235"/>
        <end position="241"/>
    </location>
    <ligand>
        <name>ATP</name>
        <dbReference type="ChEBI" id="CHEBI:30616"/>
    </ligand>
</feature>
<reference key="1">
    <citation type="journal article" date="2008" name="PLoS Genet.">
        <title>Complete genome sequence of the N2-fixing broad host range endophyte Klebsiella pneumoniae 342 and virulence predictions verified in mice.</title>
        <authorList>
            <person name="Fouts D.E."/>
            <person name="Tyler H.L."/>
            <person name="DeBoy R.T."/>
            <person name="Daugherty S."/>
            <person name="Ren Q."/>
            <person name="Badger J.H."/>
            <person name="Durkin A.S."/>
            <person name="Huot H."/>
            <person name="Shrivastava S."/>
            <person name="Kothari S."/>
            <person name="Dodson R.J."/>
            <person name="Mohamoud Y."/>
            <person name="Khouri H."/>
            <person name="Roesch L.F.W."/>
            <person name="Krogfelt K.A."/>
            <person name="Struve C."/>
            <person name="Triplett E.W."/>
            <person name="Methe B.A."/>
        </authorList>
    </citation>
    <scope>NUCLEOTIDE SEQUENCE [LARGE SCALE GENOMIC DNA]</scope>
    <source>
        <strain>342</strain>
    </source>
</reference>
<dbReference type="EC" id="6.3.5.2" evidence="1"/>
<dbReference type="EMBL" id="CP000964">
    <property type="protein sequence ID" value="ACI10630.1"/>
    <property type="molecule type" value="Genomic_DNA"/>
</dbReference>
<dbReference type="SMR" id="B5XNM4"/>
<dbReference type="MEROPS" id="C26.957"/>
<dbReference type="KEGG" id="kpe:KPK_1284"/>
<dbReference type="HOGENOM" id="CLU_014340_0_5_6"/>
<dbReference type="UniPathway" id="UPA00189">
    <property type="reaction ID" value="UER00296"/>
</dbReference>
<dbReference type="Proteomes" id="UP000001734">
    <property type="component" value="Chromosome"/>
</dbReference>
<dbReference type="GO" id="GO:0005829">
    <property type="term" value="C:cytosol"/>
    <property type="evidence" value="ECO:0007669"/>
    <property type="project" value="TreeGrafter"/>
</dbReference>
<dbReference type="GO" id="GO:0005524">
    <property type="term" value="F:ATP binding"/>
    <property type="evidence" value="ECO:0007669"/>
    <property type="project" value="UniProtKB-UniRule"/>
</dbReference>
<dbReference type="GO" id="GO:0003921">
    <property type="term" value="F:GMP synthase activity"/>
    <property type="evidence" value="ECO:0007669"/>
    <property type="project" value="InterPro"/>
</dbReference>
<dbReference type="CDD" id="cd01742">
    <property type="entry name" value="GATase1_GMP_Synthase"/>
    <property type="match status" value="1"/>
</dbReference>
<dbReference type="CDD" id="cd01997">
    <property type="entry name" value="GMP_synthase_C"/>
    <property type="match status" value="1"/>
</dbReference>
<dbReference type="FunFam" id="3.30.300.10:FF:000002">
    <property type="entry name" value="GMP synthase [glutamine-hydrolyzing]"/>
    <property type="match status" value="1"/>
</dbReference>
<dbReference type="FunFam" id="3.40.50.620:FF:000001">
    <property type="entry name" value="GMP synthase [glutamine-hydrolyzing]"/>
    <property type="match status" value="1"/>
</dbReference>
<dbReference type="FunFam" id="3.40.50.880:FF:000001">
    <property type="entry name" value="GMP synthase [glutamine-hydrolyzing]"/>
    <property type="match status" value="1"/>
</dbReference>
<dbReference type="Gene3D" id="3.30.300.10">
    <property type="match status" value="1"/>
</dbReference>
<dbReference type="Gene3D" id="3.40.50.880">
    <property type="match status" value="1"/>
</dbReference>
<dbReference type="Gene3D" id="3.40.50.620">
    <property type="entry name" value="HUPs"/>
    <property type="match status" value="1"/>
</dbReference>
<dbReference type="HAMAP" id="MF_00344">
    <property type="entry name" value="GMP_synthase"/>
    <property type="match status" value="1"/>
</dbReference>
<dbReference type="InterPro" id="IPR029062">
    <property type="entry name" value="Class_I_gatase-like"/>
</dbReference>
<dbReference type="InterPro" id="IPR017926">
    <property type="entry name" value="GATASE"/>
</dbReference>
<dbReference type="InterPro" id="IPR001674">
    <property type="entry name" value="GMP_synth_C"/>
</dbReference>
<dbReference type="InterPro" id="IPR004739">
    <property type="entry name" value="GMP_synth_GATase"/>
</dbReference>
<dbReference type="InterPro" id="IPR022955">
    <property type="entry name" value="GMP_synthase"/>
</dbReference>
<dbReference type="InterPro" id="IPR025777">
    <property type="entry name" value="GMPS_ATP_PPase_dom"/>
</dbReference>
<dbReference type="InterPro" id="IPR022310">
    <property type="entry name" value="NAD/GMP_synthase"/>
</dbReference>
<dbReference type="InterPro" id="IPR014729">
    <property type="entry name" value="Rossmann-like_a/b/a_fold"/>
</dbReference>
<dbReference type="NCBIfam" id="TIGR00884">
    <property type="entry name" value="guaA_Cterm"/>
    <property type="match status" value="1"/>
</dbReference>
<dbReference type="NCBIfam" id="TIGR00888">
    <property type="entry name" value="guaA_Nterm"/>
    <property type="match status" value="1"/>
</dbReference>
<dbReference type="NCBIfam" id="NF000848">
    <property type="entry name" value="PRK00074.1"/>
    <property type="match status" value="1"/>
</dbReference>
<dbReference type="PANTHER" id="PTHR11922:SF2">
    <property type="entry name" value="GMP SYNTHASE [GLUTAMINE-HYDROLYZING]"/>
    <property type="match status" value="1"/>
</dbReference>
<dbReference type="PANTHER" id="PTHR11922">
    <property type="entry name" value="GMP SYNTHASE-RELATED"/>
    <property type="match status" value="1"/>
</dbReference>
<dbReference type="Pfam" id="PF00117">
    <property type="entry name" value="GATase"/>
    <property type="match status" value="1"/>
</dbReference>
<dbReference type="Pfam" id="PF00958">
    <property type="entry name" value="GMP_synt_C"/>
    <property type="match status" value="1"/>
</dbReference>
<dbReference type="Pfam" id="PF02540">
    <property type="entry name" value="NAD_synthase"/>
    <property type="match status" value="1"/>
</dbReference>
<dbReference type="PRINTS" id="PR00097">
    <property type="entry name" value="ANTSNTHASEII"/>
</dbReference>
<dbReference type="PRINTS" id="PR00099">
    <property type="entry name" value="CPSGATASE"/>
</dbReference>
<dbReference type="PRINTS" id="PR00096">
    <property type="entry name" value="GATASE"/>
</dbReference>
<dbReference type="SUPFAM" id="SSF52402">
    <property type="entry name" value="Adenine nucleotide alpha hydrolases-like"/>
    <property type="match status" value="1"/>
</dbReference>
<dbReference type="SUPFAM" id="SSF52317">
    <property type="entry name" value="Class I glutamine amidotransferase-like"/>
    <property type="match status" value="1"/>
</dbReference>
<dbReference type="SUPFAM" id="SSF54810">
    <property type="entry name" value="GMP synthetase C-terminal dimerisation domain"/>
    <property type="match status" value="1"/>
</dbReference>
<dbReference type="PROSITE" id="PS51273">
    <property type="entry name" value="GATASE_TYPE_1"/>
    <property type="match status" value="1"/>
</dbReference>
<dbReference type="PROSITE" id="PS51553">
    <property type="entry name" value="GMPS_ATP_PPASE"/>
    <property type="match status" value="1"/>
</dbReference>
<comment type="function">
    <text evidence="1">Catalyzes the synthesis of GMP from XMP.</text>
</comment>
<comment type="catalytic activity">
    <reaction evidence="1">
        <text>XMP + L-glutamine + ATP + H2O = GMP + L-glutamate + AMP + diphosphate + 2 H(+)</text>
        <dbReference type="Rhea" id="RHEA:11680"/>
        <dbReference type="ChEBI" id="CHEBI:15377"/>
        <dbReference type="ChEBI" id="CHEBI:15378"/>
        <dbReference type="ChEBI" id="CHEBI:29985"/>
        <dbReference type="ChEBI" id="CHEBI:30616"/>
        <dbReference type="ChEBI" id="CHEBI:33019"/>
        <dbReference type="ChEBI" id="CHEBI:57464"/>
        <dbReference type="ChEBI" id="CHEBI:58115"/>
        <dbReference type="ChEBI" id="CHEBI:58359"/>
        <dbReference type="ChEBI" id="CHEBI:456215"/>
        <dbReference type="EC" id="6.3.5.2"/>
    </reaction>
</comment>
<comment type="pathway">
    <text evidence="1">Purine metabolism; GMP biosynthesis; GMP from XMP (L-Gln route): step 1/1.</text>
</comment>
<comment type="subunit">
    <text evidence="1">Homodimer.</text>
</comment>
<gene>
    <name evidence="1" type="primary">guaA</name>
    <name type="ordered locus">KPK_1284</name>
</gene>
<evidence type="ECO:0000255" key="1">
    <source>
        <dbReference type="HAMAP-Rule" id="MF_00344"/>
    </source>
</evidence>
<organism>
    <name type="scientific">Klebsiella pneumoniae (strain 342)</name>
    <dbReference type="NCBI Taxonomy" id="507522"/>
    <lineage>
        <taxon>Bacteria</taxon>
        <taxon>Pseudomonadati</taxon>
        <taxon>Pseudomonadota</taxon>
        <taxon>Gammaproteobacteria</taxon>
        <taxon>Enterobacterales</taxon>
        <taxon>Enterobacteriaceae</taxon>
        <taxon>Klebsiella/Raoultella group</taxon>
        <taxon>Klebsiella</taxon>
        <taxon>Klebsiella pneumoniae complex</taxon>
    </lineage>
</organism>
<protein>
    <recommendedName>
        <fullName evidence="1">GMP synthase [glutamine-hydrolyzing]</fullName>
        <ecNumber evidence="1">6.3.5.2</ecNumber>
    </recommendedName>
    <alternativeName>
        <fullName evidence="1">GMP synthetase</fullName>
    </alternativeName>
    <alternativeName>
        <fullName evidence="1">Glutamine amidotransferase</fullName>
    </alternativeName>
</protein>
<keyword id="KW-0067">ATP-binding</keyword>
<keyword id="KW-0315">Glutamine amidotransferase</keyword>
<keyword id="KW-0332">GMP biosynthesis</keyword>
<keyword id="KW-0436">Ligase</keyword>
<keyword id="KW-0547">Nucleotide-binding</keyword>
<keyword id="KW-0658">Purine biosynthesis</keyword>